<reference key="1">
    <citation type="journal article" date="2010" name="PLoS ONE">
        <title>Genome sequence of Cronobacter sakazakii BAA-894 and comparative genomic hybridization analysis with other Cronobacter species.</title>
        <authorList>
            <person name="Kucerova E."/>
            <person name="Clifton S.W."/>
            <person name="Xia X.Q."/>
            <person name="Long F."/>
            <person name="Porwollik S."/>
            <person name="Fulton L."/>
            <person name="Fronick C."/>
            <person name="Minx P."/>
            <person name="Kyung K."/>
            <person name="Warren W."/>
            <person name="Fulton R."/>
            <person name="Feng D."/>
            <person name="Wollam A."/>
            <person name="Shah N."/>
            <person name="Bhonagiri V."/>
            <person name="Nash W.E."/>
            <person name="Hallsworth-Pepin K."/>
            <person name="Wilson R.K."/>
            <person name="McClelland M."/>
            <person name="Forsythe S.J."/>
        </authorList>
    </citation>
    <scope>NUCLEOTIDE SEQUENCE [LARGE SCALE GENOMIC DNA]</scope>
    <source>
        <strain>ATCC BAA-894</strain>
    </source>
</reference>
<name>SPEB_CROS8</name>
<comment type="function">
    <text evidence="1">Catalyzes the formation of putrescine from agmatine.</text>
</comment>
<comment type="catalytic activity">
    <reaction evidence="1">
        <text>agmatine + H2O = urea + putrescine</text>
        <dbReference type="Rhea" id="RHEA:13929"/>
        <dbReference type="ChEBI" id="CHEBI:15377"/>
        <dbReference type="ChEBI" id="CHEBI:16199"/>
        <dbReference type="ChEBI" id="CHEBI:58145"/>
        <dbReference type="ChEBI" id="CHEBI:326268"/>
        <dbReference type="EC" id="3.5.3.11"/>
    </reaction>
</comment>
<comment type="cofactor">
    <cofactor evidence="1">
        <name>Mn(2+)</name>
        <dbReference type="ChEBI" id="CHEBI:29035"/>
    </cofactor>
</comment>
<comment type="pathway">
    <text evidence="1">Amine and polyamine biosynthesis; putrescine biosynthesis via agmatine pathway; putrescine from agmatine: step 1/1.</text>
</comment>
<comment type="similarity">
    <text evidence="1">Belongs to the arginase family. Agmatinase subfamily.</text>
</comment>
<feature type="chain" id="PRO_1000024281" description="Agmatinase">
    <location>
        <begin position="1"/>
        <end position="306"/>
    </location>
</feature>
<feature type="binding site" evidence="1">
    <location>
        <position position="126"/>
    </location>
    <ligand>
        <name>Mn(2+)</name>
        <dbReference type="ChEBI" id="CHEBI:29035"/>
    </ligand>
</feature>
<feature type="binding site" evidence="1">
    <location>
        <position position="149"/>
    </location>
    <ligand>
        <name>Mn(2+)</name>
        <dbReference type="ChEBI" id="CHEBI:29035"/>
    </ligand>
</feature>
<feature type="binding site" evidence="1">
    <location>
        <position position="151"/>
    </location>
    <ligand>
        <name>Mn(2+)</name>
        <dbReference type="ChEBI" id="CHEBI:29035"/>
    </ligand>
</feature>
<feature type="binding site" evidence="1">
    <location>
        <position position="153"/>
    </location>
    <ligand>
        <name>Mn(2+)</name>
        <dbReference type="ChEBI" id="CHEBI:29035"/>
    </ligand>
</feature>
<feature type="binding site" evidence="1">
    <location>
        <position position="230"/>
    </location>
    <ligand>
        <name>Mn(2+)</name>
        <dbReference type="ChEBI" id="CHEBI:29035"/>
    </ligand>
</feature>
<feature type="binding site" evidence="1">
    <location>
        <position position="232"/>
    </location>
    <ligand>
        <name>Mn(2+)</name>
        <dbReference type="ChEBI" id="CHEBI:29035"/>
    </ligand>
</feature>
<sequence length="306" mass="33572">MNTLGHQYDNSLVSNAFGFLRLPLNFMPYDSDAEWVITGIPFDMATSGRSGSRFGPAAIRQVSTNLAWEGNRFPWNFDMRKRLNVVDCGDLVYAFGDAREMSEKLQAHAEKLLAAGKRMLSFGGDHFVTLPLLRAHAKHFGKMALVHFDAHTDTYANGCEFDHGTMFYTAPNEGLIDPTRSVQIGIRTEFDKDNGFTVLDAPQVNDRTVDDVVAQVKQIVGDMPVYLTFDIDCLDPAFAPGTGTPVIGGLTSDRALKLLRGIQDLNIVGMDIVEVAPAYDQSDITALAAATLALEMLYIQAAKKGE</sequence>
<proteinExistence type="inferred from homology"/>
<keyword id="KW-0378">Hydrolase</keyword>
<keyword id="KW-0464">Manganese</keyword>
<keyword id="KW-0479">Metal-binding</keyword>
<keyword id="KW-0620">Polyamine biosynthesis</keyword>
<keyword id="KW-0661">Putrescine biosynthesis</keyword>
<keyword id="KW-1185">Reference proteome</keyword>
<keyword id="KW-0745">Spermidine biosynthesis</keyword>
<evidence type="ECO:0000255" key="1">
    <source>
        <dbReference type="HAMAP-Rule" id="MF_01418"/>
    </source>
</evidence>
<accession>A7MJQ1</accession>
<organism>
    <name type="scientific">Cronobacter sakazakii (strain ATCC BAA-894)</name>
    <name type="common">Enterobacter sakazakii</name>
    <dbReference type="NCBI Taxonomy" id="290339"/>
    <lineage>
        <taxon>Bacteria</taxon>
        <taxon>Pseudomonadati</taxon>
        <taxon>Pseudomonadota</taxon>
        <taxon>Gammaproteobacteria</taxon>
        <taxon>Enterobacterales</taxon>
        <taxon>Enterobacteriaceae</taxon>
        <taxon>Cronobacter</taxon>
    </lineage>
</organism>
<dbReference type="EC" id="3.5.3.11" evidence="1"/>
<dbReference type="EMBL" id="CP000783">
    <property type="protein sequence ID" value="ABU75701.1"/>
    <property type="molecule type" value="Genomic_DNA"/>
</dbReference>
<dbReference type="RefSeq" id="WP_007718896.1">
    <property type="nucleotide sequence ID" value="NC_009778.1"/>
</dbReference>
<dbReference type="SMR" id="A7MJQ1"/>
<dbReference type="GeneID" id="56733361"/>
<dbReference type="KEGG" id="esa:ESA_00403"/>
<dbReference type="HOGENOM" id="CLU_039478_0_0_6"/>
<dbReference type="UniPathway" id="UPA00534">
    <property type="reaction ID" value="UER00287"/>
</dbReference>
<dbReference type="Proteomes" id="UP000000260">
    <property type="component" value="Chromosome"/>
</dbReference>
<dbReference type="GO" id="GO:0008783">
    <property type="term" value="F:agmatinase activity"/>
    <property type="evidence" value="ECO:0007669"/>
    <property type="project" value="UniProtKB-UniRule"/>
</dbReference>
<dbReference type="GO" id="GO:0030145">
    <property type="term" value="F:manganese ion binding"/>
    <property type="evidence" value="ECO:0007669"/>
    <property type="project" value="InterPro"/>
</dbReference>
<dbReference type="GO" id="GO:0033389">
    <property type="term" value="P:putrescine biosynthetic process from arginine, via agmatine"/>
    <property type="evidence" value="ECO:0007669"/>
    <property type="project" value="TreeGrafter"/>
</dbReference>
<dbReference type="GO" id="GO:0008295">
    <property type="term" value="P:spermidine biosynthetic process"/>
    <property type="evidence" value="ECO:0007669"/>
    <property type="project" value="UniProtKB-UniRule"/>
</dbReference>
<dbReference type="CDD" id="cd11592">
    <property type="entry name" value="Agmatinase_PAH"/>
    <property type="match status" value="1"/>
</dbReference>
<dbReference type="FunFam" id="3.40.800.10:FF:000001">
    <property type="entry name" value="Agmatinase"/>
    <property type="match status" value="1"/>
</dbReference>
<dbReference type="Gene3D" id="3.40.800.10">
    <property type="entry name" value="Ureohydrolase domain"/>
    <property type="match status" value="1"/>
</dbReference>
<dbReference type="HAMAP" id="MF_01418">
    <property type="entry name" value="SpeB"/>
    <property type="match status" value="1"/>
</dbReference>
<dbReference type="InterPro" id="IPR023694">
    <property type="entry name" value="Agmatinase"/>
</dbReference>
<dbReference type="InterPro" id="IPR005925">
    <property type="entry name" value="Agmatinase-rel"/>
</dbReference>
<dbReference type="InterPro" id="IPR006035">
    <property type="entry name" value="Ureohydrolase"/>
</dbReference>
<dbReference type="InterPro" id="IPR023696">
    <property type="entry name" value="Ureohydrolase_dom_sf"/>
</dbReference>
<dbReference type="InterPro" id="IPR020855">
    <property type="entry name" value="Ureohydrolase_Mn_BS"/>
</dbReference>
<dbReference type="NCBIfam" id="TIGR01230">
    <property type="entry name" value="agmatinase"/>
    <property type="match status" value="1"/>
</dbReference>
<dbReference type="NCBIfam" id="NF002564">
    <property type="entry name" value="PRK02190.1"/>
    <property type="match status" value="1"/>
</dbReference>
<dbReference type="PANTHER" id="PTHR11358">
    <property type="entry name" value="ARGINASE/AGMATINASE"/>
    <property type="match status" value="1"/>
</dbReference>
<dbReference type="PANTHER" id="PTHR11358:SF26">
    <property type="entry name" value="GUANIDINO ACID HYDROLASE, MITOCHONDRIAL"/>
    <property type="match status" value="1"/>
</dbReference>
<dbReference type="Pfam" id="PF00491">
    <property type="entry name" value="Arginase"/>
    <property type="match status" value="1"/>
</dbReference>
<dbReference type="PIRSF" id="PIRSF036979">
    <property type="entry name" value="Arginase"/>
    <property type="match status" value="1"/>
</dbReference>
<dbReference type="SUPFAM" id="SSF52768">
    <property type="entry name" value="Arginase/deacetylase"/>
    <property type="match status" value="1"/>
</dbReference>
<dbReference type="PROSITE" id="PS01053">
    <property type="entry name" value="ARGINASE_1"/>
    <property type="match status" value="1"/>
</dbReference>
<dbReference type="PROSITE" id="PS51409">
    <property type="entry name" value="ARGINASE_2"/>
    <property type="match status" value="1"/>
</dbReference>
<gene>
    <name evidence="1" type="primary">speB</name>
    <name type="ordered locus">ESA_00403</name>
</gene>
<protein>
    <recommendedName>
        <fullName evidence="1">Agmatinase</fullName>
        <ecNumber evidence="1">3.5.3.11</ecNumber>
    </recommendedName>
    <alternativeName>
        <fullName evidence="1">Agmatine ureohydrolase</fullName>
        <shortName evidence="1">AUH</shortName>
    </alternativeName>
</protein>